<proteinExistence type="inferred from homology"/>
<gene>
    <name type="ordered locus">AF_2073</name>
</gene>
<sequence length="301" mass="33474">MLELNGVPVDDTYCEAFDGIYSRIIVTAKHKWLLKKAAYSATALPSTVFGEAEGGVEKWLSPQETPDGRLGAICQIWVQKSKKFLDVLMREMGKRIRQGILVVPTTRVFNATESETKFDAEINVGRCGDGYEWEDEMWGRKVIRVPIMFGEFIIERYIGYAEGIAGGNIWYFCESEEAALEAGEAAVEALKQLDGVITSFDICSAGSKPETKYPEMGPSTNHYFCPTLKGKIPDSKVPDGVKSIPEIVINGIKREVVEKAMFVCMDVVSKIDGVVRISAGNYEGKLGQHKIYLKDLIEKYS</sequence>
<comment type="similarity">
    <text evidence="1">Belongs to the FTR family.</text>
</comment>
<reference key="1">
    <citation type="journal article" date="1997" name="Nature">
        <title>The complete genome sequence of the hyperthermophilic, sulphate-reducing archaeon Archaeoglobus fulgidus.</title>
        <authorList>
            <person name="Klenk H.-P."/>
            <person name="Clayton R.A."/>
            <person name="Tomb J.-F."/>
            <person name="White O."/>
            <person name="Nelson K.E."/>
            <person name="Ketchum K.A."/>
            <person name="Dodson R.J."/>
            <person name="Gwinn M.L."/>
            <person name="Hickey E.K."/>
            <person name="Peterson J.D."/>
            <person name="Richardson D.L."/>
            <person name="Kerlavage A.R."/>
            <person name="Graham D.E."/>
            <person name="Kyrpides N.C."/>
            <person name="Fleischmann R.D."/>
            <person name="Quackenbush J."/>
            <person name="Lee N.H."/>
            <person name="Sutton G.G."/>
            <person name="Gill S.R."/>
            <person name="Kirkness E.F."/>
            <person name="Dougherty B.A."/>
            <person name="McKenney K."/>
            <person name="Adams M.D."/>
            <person name="Loftus B.J."/>
            <person name="Peterson S.N."/>
            <person name="Reich C.I."/>
            <person name="McNeil L.K."/>
            <person name="Badger J.H."/>
            <person name="Glodek A."/>
            <person name="Zhou L."/>
            <person name="Overbeek R."/>
            <person name="Gocayne J.D."/>
            <person name="Weidman J.F."/>
            <person name="McDonald L.A."/>
            <person name="Utterback T.R."/>
            <person name="Cotton M.D."/>
            <person name="Spriggs T."/>
            <person name="Artiach P."/>
            <person name="Kaine B.P."/>
            <person name="Sykes S.M."/>
            <person name="Sadow P.W."/>
            <person name="D'Andrea K.P."/>
            <person name="Bowman C."/>
            <person name="Fujii C."/>
            <person name="Garland S.A."/>
            <person name="Mason T.M."/>
            <person name="Olsen G.J."/>
            <person name="Fraser C.M."/>
            <person name="Smith H.O."/>
            <person name="Woese C.R."/>
            <person name="Venter J.C."/>
        </authorList>
    </citation>
    <scope>NUCLEOTIDE SEQUENCE [LARGE SCALE GENOMIC DNA]</scope>
    <source>
        <strain>ATCC 49558 / DSM 4304 / JCM 9628 / NBRC 100126 / VC-16</strain>
    </source>
</reference>
<organism>
    <name type="scientific">Archaeoglobus fulgidus (strain ATCC 49558 / DSM 4304 / JCM 9628 / NBRC 100126 / VC-16)</name>
    <dbReference type="NCBI Taxonomy" id="224325"/>
    <lineage>
        <taxon>Archaea</taxon>
        <taxon>Methanobacteriati</taxon>
        <taxon>Methanobacteriota</taxon>
        <taxon>Archaeoglobi</taxon>
        <taxon>Archaeoglobales</taxon>
        <taxon>Archaeoglobaceae</taxon>
        <taxon>Archaeoglobus</taxon>
    </lineage>
</organism>
<name>FTRL_ARCFU</name>
<dbReference type="EMBL" id="AE000782">
    <property type="protein sequence ID" value="AAB89176.1"/>
    <property type="molecule type" value="Genomic_DNA"/>
</dbReference>
<dbReference type="PIR" id="H69508">
    <property type="entry name" value="H69508"/>
</dbReference>
<dbReference type="RefSeq" id="WP_010879565.1">
    <property type="nucleotide sequence ID" value="NC_000917.1"/>
</dbReference>
<dbReference type="SMR" id="O28206"/>
<dbReference type="STRING" id="224325.AF_2073"/>
<dbReference type="PaxDb" id="224325-AF_2073"/>
<dbReference type="EnsemblBacteria" id="AAB89176">
    <property type="protein sequence ID" value="AAB89176"/>
    <property type="gene ID" value="AF_2073"/>
</dbReference>
<dbReference type="KEGG" id="afu:AF_2073"/>
<dbReference type="eggNOG" id="arCOG02695">
    <property type="taxonomic scope" value="Archaea"/>
</dbReference>
<dbReference type="HOGENOM" id="CLU_081314_0_0_2"/>
<dbReference type="OrthoDB" id="73512at2157"/>
<dbReference type="PhylomeDB" id="O28206"/>
<dbReference type="BioCyc" id="MetaCyc:AF_RS10430-MONOMER"/>
<dbReference type="Proteomes" id="UP000002199">
    <property type="component" value="Chromosome"/>
</dbReference>
<dbReference type="GO" id="GO:0030270">
    <property type="term" value="F:formylmethanofuran-tetrahydromethanopterin N-formyltransferase activity"/>
    <property type="evidence" value="ECO:0007669"/>
    <property type="project" value="InterPro"/>
</dbReference>
<dbReference type="GO" id="GO:0006730">
    <property type="term" value="P:one-carbon metabolic process"/>
    <property type="evidence" value="ECO:0007669"/>
    <property type="project" value="InterPro"/>
</dbReference>
<dbReference type="Gene3D" id="3.30.70.520">
    <property type="match status" value="2"/>
</dbReference>
<dbReference type="InterPro" id="IPR014053">
    <property type="entry name" value="ForMFR_H4MPT_ForTrfase"/>
</dbReference>
<dbReference type="InterPro" id="IPR002770">
    <property type="entry name" value="ForMFR_H4MPT_ForTrfase_C"/>
</dbReference>
<dbReference type="InterPro" id="IPR023447">
    <property type="entry name" value="ForMFR_H4MPT_ForTrfase_fd-like"/>
</dbReference>
<dbReference type="InterPro" id="IPR022667">
    <property type="entry name" value="ForMFR_H4MPT_ForTrfase_N"/>
</dbReference>
<dbReference type="NCBIfam" id="NF002554">
    <property type="entry name" value="PRK02114.1"/>
    <property type="match status" value="1"/>
</dbReference>
<dbReference type="Pfam" id="PF01913">
    <property type="entry name" value="FTR"/>
    <property type="match status" value="1"/>
</dbReference>
<dbReference type="Pfam" id="PF02741">
    <property type="entry name" value="FTR_C"/>
    <property type="match status" value="1"/>
</dbReference>
<dbReference type="PIRSF" id="PIRSF006414">
    <property type="entry name" value="Ftr_formyl_trnsf"/>
    <property type="match status" value="1"/>
</dbReference>
<dbReference type="SUPFAM" id="SSF55112">
    <property type="entry name" value="Formylmethanofuran:tetrahydromethanopterin formyltransferase"/>
    <property type="match status" value="2"/>
</dbReference>
<protein>
    <recommendedName>
        <fullName>Formylmethanofuran--tetrahydromethanopterin formyltransferase-like protein</fullName>
    </recommendedName>
</protein>
<keyword id="KW-1185">Reference proteome</keyword>
<keyword id="KW-0808">Transferase</keyword>
<evidence type="ECO:0000305" key="1"/>
<accession>O28206</accession>
<feature type="chain" id="PRO_0000138126" description="Formylmethanofuran--tetrahydromethanopterin formyltransferase-like protein">
    <location>
        <begin position="1"/>
        <end position="301"/>
    </location>
</feature>